<keyword id="KW-0378">Hydrolase</keyword>
<keyword id="KW-0614">Plasmid</keyword>
<keyword id="KW-0645">Protease</keyword>
<proteinExistence type="predicted"/>
<feature type="chain" id="PRO_0000079183" description="ATP-dependent protease">
    <location>
        <begin position="1"/>
        <end position="310"/>
    </location>
</feature>
<feature type="domain" description="Integrase catalytic" evidence="1">
    <location>
        <begin position="24"/>
        <end position="186"/>
    </location>
</feature>
<geneLocation type="plasmid">
    <name>pUCL22</name>
</geneLocation>
<name>ADPR_LACLL</name>
<evidence type="ECO:0000255" key="1">
    <source>
        <dbReference type="PROSITE-ProRule" id="PRU00457"/>
    </source>
</evidence>
<sequence>MLSVPKSYTNGKMDQVVFQKQRNRLNQCFFKFKNQTKYIQFRLSEEQYNKLKISGETYGLSPNLYAKKLAQKSHLKKPYLEHDQAKSLLLELSKQGSQFKSASFRKLLDEHQLLASYSKPGYPYDNAVTEVFFKYLKQREINRRTYHSIQEVQLSCFEYIEQFYNNYNPHSANNGLTPNQKEENYFKKNIAHLTETDIVDRLLKGSPALRVGYQLYQDFLYAVKERDYVSFEELLTNNIMLPEGYQTILRTFQKFLPQIKNALQQSYSNGPLECLNNHIKVLKRNAYGFRSFYNFKLRIMIRHGNALIFN</sequence>
<dbReference type="EC" id="3.4.21.-"/>
<dbReference type="EMBL" id="X67821">
    <property type="protein sequence ID" value="CAA48032.1"/>
    <property type="molecule type" value="Genomic_DNA"/>
</dbReference>
<dbReference type="PIR" id="S35907">
    <property type="entry name" value="S35907"/>
</dbReference>
<dbReference type="GO" id="GO:0003676">
    <property type="term" value="F:nucleic acid binding"/>
    <property type="evidence" value="ECO:0007669"/>
    <property type="project" value="InterPro"/>
</dbReference>
<dbReference type="GO" id="GO:0008233">
    <property type="term" value="F:peptidase activity"/>
    <property type="evidence" value="ECO:0007669"/>
    <property type="project" value="UniProtKB-KW"/>
</dbReference>
<dbReference type="GO" id="GO:0015074">
    <property type="term" value="P:DNA integration"/>
    <property type="evidence" value="ECO:0007669"/>
    <property type="project" value="InterPro"/>
</dbReference>
<dbReference type="GO" id="GO:0006508">
    <property type="term" value="P:proteolysis"/>
    <property type="evidence" value="ECO:0007669"/>
    <property type="project" value="UniProtKB-KW"/>
</dbReference>
<dbReference type="Gene3D" id="3.30.420.10">
    <property type="entry name" value="Ribonuclease H-like superfamily/Ribonuclease H"/>
    <property type="match status" value="1"/>
</dbReference>
<dbReference type="InterPro" id="IPR001584">
    <property type="entry name" value="Integrase_cat-core"/>
</dbReference>
<dbReference type="InterPro" id="IPR012337">
    <property type="entry name" value="RNaseH-like_sf"/>
</dbReference>
<dbReference type="InterPro" id="IPR036397">
    <property type="entry name" value="RNaseH_sf"/>
</dbReference>
<dbReference type="InterPro" id="IPR002560">
    <property type="entry name" value="Transposase_DDE"/>
</dbReference>
<dbReference type="InterPro" id="IPR050900">
    <property type="entry name" value="Transposase_IS3/IS150/IS904"/>
</dbReference>
<dbReference type="PANTHER" id="PTHR46889">
    <property type="entry name" value="TRANSPOSASE INSF FOR INSERTION SEQUENCE IS3B-RELATED"/>
    <property type="match status" value="1"/>
</dbReference>
<dbReference type="PANTHER" id="PTHR46889:SF4">
    <property type="entry name" value="TRANSPOSASE INSO FOR INSERTION SEQUENCE ELEMENT IS911B-RELATED"/>
    <property type="match status" value="1"/>
</dbReference>
<dbReference type="Pfam" id="PF01610">
    <property type="entry name" value="DDE_Tnp_ISL3"/>
    <property type="match status" value="1"/>
</dbReference>
<dbReference type="Pfam" id="PF13683">
    <property type="entry name" value="rve_3"/>
    <property type="match status" value="1"/>
</dbReference>
<dbReference type="SUPFAM" id="SSF53098">
    <property type="entry name" value="Ribonuclease H-like"/>
    <property type="match status" value="1"/>
</dbReference>
<dbReference type="PROSITE" id="PS50994">
    <property type="entry name" value="INTEGRASE"/>
    <property type="match status" value="1"/>
</dbReference>
<accession>Q06715</accession>
<reference key="1">
    <citation type="journal article" date="1993" name="Mol. Microbiol.">
        <title>Two genes present on a transposon-like structure in Lactococcus lactis are involved in a Clp-family proteolytic activity.</title>
        <authorList>
            <person name="Huang D.C."/>
            <person name="Huang X.F."/>
            <person name="Novel G."/>
            <person name="Novel M."/>
        </authorList>
    </citation>
    <scope>NUCLEOTIDE SEQUENCE [GENOMIC DNA]</scope>
    <source>
        <strain>CNRZ 270</strain>
    </source>
</reference>
<protein>
    <recommendedName>
        <fullName>ATP-dependent protease</fullName>
        <ecNumber>3.4.21.-</ecNumber>
    </recommendedName>
</protein>
<organism>
    <name type="scientific">Lactococcus lactis subsp. lactis</name>
    <name type="common">Streptococcus lactis</name>
    <dbReference type="NCBI Taxonomy" id="1360"/>
    <lineage>
        <taxon>Bacteria</taxon>
        <taxon>Bacillati</taxon>
        <taxon>Bacillota</taxon>
        <taxon>Bacilli</taxon>
        <taxon>Lactobacillales</taxon>
        <taxon>Streptococcaceae</taxon>
        <taxon>Lactococcus</taxon>
    </lineage>
</organism>